<sequence length="741" mass="87328">MDESFNSILEPENAWLFLFDDVSQLQQLPIVQNNQENFINSIDFNTGDVTTTNISGLNFQSLEESLNSDTSIENKPQIIEQIQFLQQQQQQQHDQIQQQLHNFQQQYQQQYQQRQQQYQQQYQKPYTPPSFIYSEKNDLVPQQQFHLGQENLQQPPQSLQQQQQPPSPSSPPQQQQQPQQQLQQLQQQHQQHQQHQQQPQFQQLPIQHELPQQSQLQHIQIQSQQIPTQPQPQQIQKQIQIEQPQVQVQQQIQPQQQIQPQQHIQLQQHIQLQQPQIQQQQLPPQTIQQKEINKKNQSKQSSNSMPLSQQIFFNTPKLDQHLLSYFQTQKTNNTINTLNVDQKRDNIEKQKENTSPPTPSSPVPTIINSNSTDINQISPSQQQQQQQQQQQQTTDINKILTLQQLEQQQLEYQKQQQQQQQFNLTFDDESKKSIKRINQNIANRNFRQRKKDHIKDIEDKMMELTLENEKLKKENESIRQQEHEGGTMAILKPSPEKKQLMLEIRSIVRQIGEALKEDNEKNLIYLLHMYHGAVAKRYSSIDKDAEQIASPEIQLRLASIGYVLKSTPFLTNIFQGIESDSWFNLFKEKANITSQQSVQLDIIREKYCEYNLKLLDEIHDLDSEVKKFFFQNIFVFQSYSISLKTSKPLDLSQQIEFACKLKLLKNKFFENSCLMFETFSSLSKILTPKQEALLLVEIDIFSCFNLKKFEMITNVWANKSKMKKSSDPFKIGDLSQIFEKP</sequence>
<protein>
    <recommendedName>
        <fullName>Probable basic-leucine zipper transcription factor I</fullName>
    </recommendedName>
</protein>
<evidence type="ECO:0000250" key="1"/>
<evidence type="ECO:0000255" key="2"/>
<evidence type="ECO:0000255" key="3">
    <source>
        <dbReference type="PROSITE-ProRule" id="PRU00978"/>
    </source>
</evidence>
<evidence type="ECO:0000256" key="4">
    <source>
        <dbReference type="SAM" id="MobiDB-lite"/>
    </source>
</evidence>
<evidence type="ECO:0000305" key="5"/>
<dbReference type="EMBL" id="AAFI02000158">
    <property type="protein sequence ID" value="EAL62358.1"/>
    <property type="molecule type" value="Genomic_DNA"/>
</dbReference>
<dbReference type="RefSeq" id="XP_635860.1">
    <property type="nucleotide sequence ID" value="XM_630768.1"/>
</dbReference>
<dbReference type="SMR" id="Q54GG8"/>
<dbReference type="FunCoup" id="Q54GG8">
    <property type="interactions" value="65"/>
</dbReference>
<dbReference type="STRING" id="44689.Q54GG8"/>
<dbReference type="GlyGen" id="Q54GG8">
    <property type="glycosylation" value="1 site"/>
</dbReference>
<dbReference type="PaxDb" id="44689-DDB0216260"/>
<dbReference type="EnsemblProtists" id="EAL62358">
    <property type="protein sequence ID" value="EAL62358"/>
    <property type="gene ID" value="DDB_G0290173"/>
</dbReference>
<dbReference type="GeneID" id="8627516"/>
<dbReference type="KEGG" id="ddi:DDB_G0290173"/>
<dbReference type="dictyBase" id="DDB_G0290173">
    <property type="gene designation" value="bzpI"/>
</dbReference>
<dbReference type="VEuPathDB" id="AmoebaDB:DDB_G0290173"/>
<dbReference type="HOGENOM" id="CLU_322745_0_0_1"/>
<dbReference type="InParanoid" id="Q54GG8"/>
<dbReference type="OMA" id="NIANRNF"/>
<dbReference type="PRO" id="PR:Q54GG8"/>
<dbReference type="Proteomes" id="UP000002195">
    <property type="component" value="Chromosome 5"/>
</dbReference>
<dbReference type="GO" id="GO:0005634">
    <property type="term" value="C:nucleus"/>
    <property type="evidence" value="ECO:0000318"/>
    <property type="project" value="GO_Central"/>
</dbReference>
<dbReference type="GO" id="GO:0003700">
    <property type="term" value="F:DNA-binding transcription factor activity"/>
    <property type="evidence" value="ECO:0007669"/>
    <property type="project" value="InterPro"/>
</dbReference>
<dbReference type="GO" id="GO:0043565">
    <property type="term" value="F:sequence-specific DNA binding"/>
    <property type="evidence" value="ECO:0000318"/>
    <property type="project" value="GO_Central"/>
</dbReference>
<dbReference type="GO" id="GO:0010468">
    <property type="term" value="P:regulation of gene expression"/>
    <property type="evidence" value="ECO:0000318"/>
    <property type="project" value="GO_Central"/>
</dbReference>
<dbReference type="CDD" id="cd14686">
    <property type="entry name" value="bZIP"/>
    <property type="match status" value="1"/>
</dbReference>
<dbReference type="Gene3D" id="1.20.5.170">
    <property type="match status" value="1"/>
</dbReference>
<dbReference type="InterPro" id="IPR004827">
    <property type="entry name" value="bZIP"/>
</dbReference>
<dbReference type="InterPro" id="IPR046347">
    <property type="entry name" value="bZIP_sf"/>
</dbReference>
<dbReference type="PANTHER" id="PTHR14312">
    <property type="entry name" value="CREB/ATF BZIP TRANSCRIPTION FACTOR"/>
    <property type="match status" value="1"/>
</dbReference>
<dbReference type="PANTHER" id="PTHR14312:SF2">
    <property type="entry name" value="GLYCOSYLTRANSFERASE-RELATED"/>
    <property type="match status" value="1"/>
</dbReference>
<dbReference type="Pfam" id="PF07716">
    <property type="entry name" value="bZIP_2"/>
    <property type="match status" value="1"/>
</dbReference>
<dbReference type="SUPFAM" id="SSF57959">
    <property type="entry name" value="Leucine zipper domain"/>
    <property type="match status" value="1"/>
</dbReference>
<dbReference type="PROSITE" id="PS50217">
    <property type="entry name" value="BZIP"/>
    <property type="match status" value="1"/>
</dbReference>
<reference key="1">
    <citation type="journal article" date="2005" name="Nature">
        <title>The genome of the social amoeba Dictyostelium discoideum.</title>
        <authorList>
            <person name="Eichinger L."/>
            <person name="Pachebat J.A."/>
            <person name="Gloeckner G."/>
            <person name="Rajandream M.A."/>
            <person name="Sucgang R."/>
            <person name="Berriman M."/>
            <person name="Song J."/>
            <person name="Olsen R."/>
            <person name="Szafranski K."/>
            <person name="Xu Q."/>
            <person name="Tunggal B."/>
            <person name="Kummerfeld S."/>
            <person name="Madera M."/>
            <person name="Konfortov B.A."/>
            <person name="Rivero F."/>
            <person name="Bankier A.T."/>
            <person name="Lehmann R."/>
            <person name="Hamlin N."/>
            <person name="Davies R."/>
            <person name="Gaudet P."/>
            <person name="Fey P."/>
            <person name="Pilcher K."/>
            <person name="Chen G."/>
            <person name="Saunders D."/>
            <person name="Sodergren E.J."/>
            <person name="Davis P."/>
            <person name="Kerhornou A."/>
            <person name="Nie X."/>
            <person name="Hall N."/>
            <person name="Anjard C."/>
            <person name="Hemphill L."/>
            <person name="Bason N."/>
            <person name="Farbrother P."/>
            <person name="Desany B."/>
            <person name="Just E."/>
            <person name="Morio T."/>
            <person name="Rost R."/>
            <person name="Churcher C.M."/>
            <person name="Cooper J."/>
            <person name="Haydock S."/>
            <person name="van Driessche N."/>
            <person name="Cronin A."/>
            <person name="Goodhead I."/>
            <person name="Muzny D.M."/>
            <person name="Mourier T."/>
            <person name="Pain A."/>
            <person name="Lu M."/>
            <person name="Harper D."/>
            <person name="Lindsay R."/>
            <person name="Hauser H."/>
            <person name="James K.D."/>
            <person name="Quiles M."/>
            <person name="Madan Babu M."/>
            <person name="Saito T."/>
            <person name="Buchrieser C."/>
            <person name="Wardroper A."/>
            <person name="Felder M."/>
            <person name="Thangavelu M."/>
            <person name="Johnson D."/>
            <person name="Knights A."/>
            <person name="Loulseged H."/>
            <person name="Mungall K.L."/>
            <person name="Oliver K."/>
            <person name="Price C."/>
            <person name="Quail M.A."/>
            <person name="Urushihara H."/>
            <person name="Hernandez J."/>
            <person name="Rabbinowitsch E."/>
            <person name="Steffen D."/>
            <person name="Sanders M."/>
            <person name="Ma J."/>
            <person name="Kohara Y."/>
            <person name="Sharp S."/>
            <person name="Simmonds M.N."/>
            <person name="Spiegler S."/>
            <person name="Tivey A."/>
            <person name="Sugano S."/>
            <person name="White B."/>
            <person name="Walker D."/>
            <person name="Woodward J.R."/>
            <person name="Winckler T."/>
            <person name="Tanaka Y."/>
            <person name="Shaulsky G."/>
            <person name="Schleicher M."/>
            <person name="Weinstock G.M."/>
            <person name="Rosenthal A."/>
            <person name="Cox E.C."/>
            <person name="Chisholm R.L."/>
            <person name="Gibbs R.A."/>
            <person name="Loomis W.F."/>
            <person name="Platzer M."/>
            <person name="Kay R.R."/>
            <person name="Williams J.G."/>
            <person name="Dear P.H."/>
            <person name="Noegel A.A."/>
            <person name="Barrell B.G."/>
            <person name="Kuspa A."/>
        </authorList>
    </citation>
    <scope>NUCLEOTIDE SEQUENCE [LARGE SCALE GENOMIC DNA]</scope>
    <source>
        <strain>AX4</strain>
    </source>
</reference>
<reference key="2">
    <citation type="journal article" date="2006" name="Development">
        <title>bZIP transcription factor interactions regulate DIF responses in Dictyostelium.</title>
        <authorList>
            <person name="Huang E."/>
            <person name="Blagg S.L."/>
            <person name="Keller T."/>
            <person name="Katoh M."/>
            <person name="Shaulsky G."/>
            <person name="Thompson C.R.L."/>
        </authorList>
    </citation>
    <scope>IDENTIFICATION</scope>
</reference>
<comment type="function">
    <text evidence="1">Probable transcriptional regulator.</text>
</comment>
<comment type="subcellular location">
    <subcellularLocation>
        <location evidence="3">Nucleus</location>
    </subcellularLocation>
</comment>
<comment type="similarity">
    <text evidence="5">Belongs to the bZIP family.</text>
</comment>
<accession>Q54GG8</accession>
<keyword id="KW-0175">Coiled coil</keyword>
<keyword id="KW-0238">DNA-binding</keyword>
<keyword id="KW-0539">Nucleus</keyword>
<keyword id="KW-1185">Reference proteome</keyword>
<keyword id="KW-0804">Transcription</keyword>
<keyword id="KW-0805">Transcription regulation</keyword>
<name>BZPI_DICDI</name>
<gene>
    <name type="primary">bzpI</name>
    <name type="ORF">DDB_G0290173</name>
</gene>
<proteinExistence type="inferred from homology"/>
<organism>
    <name type="scientific">Dictyostelium discoideum</name>
    <name type="common">Social amoeba</name>
    <dbReference type="NCBI Taxonomy" id="44689"/>
    <lineage>
        <taxon>Eukaryota</taxon>
        <taxon>Amoebozoa</taxon>
        <taxon>Evosea</taxon>
        <taxon>Eumycetozoa</taxon>
        <taxon>Dictyostelia</taxon>
        <taxon>Dictyosteliales</taxon>
        <taxon>Dictyosteliaceae</taxon>
        <taxon>Dictyostelium</taxon>
    </lineage>
</organism>
<feature type="chain" id="PRO_0000383602" description="Probable basic-leucine zipper transcription factor I">
    <location>
        <begin position="1"/>
        <end position="741"/>
    </location>
</feature>
<feature type="domain" description="bZIP" evidence="3">
    <location>
        <begin position="429"/>
        <end position="492"/>
    </location>
</feature>
<feature type="region of interest" description="Disordered" evidence="4">
    <location>
        <begin position="153"/>
        <end position="237"/>
    </location>
</feature>
<feature type="region of interest" description="Disordered" evidence="4">
    <location>
        <begin position="277"/>
        <end position="305"/>
    </location>
</feature>
<feature type="region of interest" description="Disordered" evidence="4">
    <location>
        <begin position="349"/>
        <end position="390"/>
    </location>
</feature>
<feature type="region of interest" description="Basic motif" evidence="3">
    <location>
        <begin position="431"/>
        <end position="432"/>
    </location>
</feature>
<feature type="region of interest" description="Leucine-zipper" evidence="3">
    <location>
        <begin position="434"/>
        <end position="441"/>
    </location>
</feature>
<feature type="coiled-coil region" evidence="2">
    <location>
        <begin position="77"/>
        <end position="117"/>
    </location>
</feature>
<feature type="compositionally biased region" description="Low complexity" evidence="4">
    <location>
        <begin position="153"/>
        <end position="164"/>
    </location>
</feature>
<feature type="compositionally biased region" description="Low complexity" evidence="4">
    <location>
        <begin position="172"/>
        <end position="237"/>
    </location>
</feature>
<feature type="compositionally biased region" description="Low complexity" evidence="4">
    <location>
        <begin position="277"/>
        <end position="290"/>
    </location>
</feature>
<feature type="compositionally biased region" description="Low complexity" evidence="4">
    <location>
        <begin position="381"/>
        <end position="390"/>
    </location>
</feature>